<keyword id="KW-0004">4Fe-4S</keyword>
<keyword id="KW-0408">Iron</keyword>
<keyword id="KW-0411">Iron-sulfur</keyword>
<keyword id="KW-0456">Lyase</keyword>
<keyword id="KW-0479">Metal-binding</keyword>
<keyword id="KW-1185">Reference proteome</keyword>
<keyword id="KW-0949">S-adenosyl-L-methionine</keyword>
<keyword id="KW-0784">Thiamine biosynthesis</keyword>
<keyword id="KW-0862">Zinc</keyword>
<comment type="function">
    <text evidence="1">Catalyzes the synthesis of the hydroxymethylpyrimidine phosphate (HMP-P) moiety of thiamine from aminoimidazole ribotide (AIR) in a radical S-adenosyl-L-methionine (SAM)-dependent reaction.</text>
</comment>
<comment type="catalytic activity">
    <reaction evidence="1">
        <text>5-amino-1-(5-phospho-beta-D-ribosyl)imidazole + S-adenosyl-L-methionine = 4-amino-2-methyl-5-(phosphooxymethyl)pyrimidine + CO + 5'-deoxyadenosine + formate + L-methionine + 3 H(+)</text>
        <dbReference type="Rhea" id="RHEA:24840"/>
        <dbReference type="ChEBI" id="CHEBI:15378"/>
        <dbReference type="ChEBI" id="CHEBI:15740"/>
        <dbReference type="ChEBI" id="CHEBI:17245"/>
        <dbReference type="ChEBI" id="CHEBI:17319"/>
        <dbReference type="ChEBI" id="CHEBI:57844"/>
        <dbReference type="ChEBI" id="CHEBI:58354"/>
        <dbReference type="ChEBI" id="CHEBI:59789"/>
        <dbReference type="ChEBI" id="CHEBI:137981"/>
        <dbReference type="EC" id="4.1.99.17"/>
    </reaction>
</comment>
<comment type="cofactor">
    <cofactor evidence="1">
        <name>[4Fe-4S] cluster</name>
        <dbReference type="ChEBI" id="CHEBI:49883"/>
    </cofactor>
    <text evidence="1">Binds 1 [4Fe-4S] cluster per subunit. The cluster is coordinated with 3 cysteines and an exchangeable S-adenosyl-L-methionine.</text>
</comment>
<comment type="pathway">
    <text evidence="1">Cofactor biosynthesis; thiamine diphosphate biosynthesis.</text>
</comment>
<comment type="similarity">
    <text evidence="1">Belongs to the ThiC family.</text>
</comment>
<gene>
    <name evidence="1" type="primary">thiC</name>
    <name type="ordered locus">PMN2A_1188</name>
</gene>
<sequence length="466" mass="52101">MRNSWVASRKGKTNVSQMHFARKGEITEEMRYVAKRENLPESLVMEEVARGRMVIPANINHMNLEPMAIGIASTCKVNANIGASPNASDISEELKKLDLAVKYGADTLMDLSTGGVNLDEVRTEIINASPIPIGTVPVYQALESVHGSISRLNEDDFLHIIEKHCQQGVDYQTIHAGLLIEHLPKVKGRITGIVSRGGGILAQWMLYHYKQNPLFTRFDDICEIFKRYDCTFSLGDSLRPGCLHDASDEAQLAELKTLGELTRRAWKHDVQVMVEGPGHVPMDQIEFNVRKQMEECSEAPFYVLGPLVTDISPGYDHISSAIGAAMAGWYGTAMLCYVTPKEHLGLPNPEDVREGLIAYKIAAHAADVARHRSGARDRDDELSKARKEFDWNKQFELSLDPERAKQYHDETLPEEIFKKAEFCSMCGPNHCPMNTKITDEDLDKLNDQIQSKGAAELTPVKLNKEN</sequence>
<name>THIC_PROMT</name>
<dbReference type="EC" id="4.1.99.17" evidence="1"/>
<dbReference type="EMBL" id="CP000095">
    <property type="protein sequence ID" value="AAZ58678.1"/>
    <property type="molecule type" value="Genomic_DNA"/>
</dbReference>
<dbReference type="RefSeq" id="WP_011295532.1">
    <property type="nucleotide sequence ID" value="NC_007335.2"/>
</dbReference>
<dbReference type="SMR" id="Q46IK0"/>
<dbReference type="STRING" id="59920.PMN2A_1188"/>
<dbReference type="KEGG" id="pmn:PMN2A_1188"/>
<dbReference type="HOGENOM" id="CLU_013181_2_1_3"/>
<dbReference type="OrthoDB" id="9805897at2"/>
<dbReference type="PhylomeDB" id="Q46IK0"/>
<dbReference type="UniPathway" id="UPA00060"/>
<dbReference type="Proteomes" id="UP000002535">
    <property type="component" value="Chromosome"/>
</dbReference>
<dbReference type="GO" id="GO:0005829">
    <property type="term" value="C:cytosol"/>
    <property type="evidence" value="ECO:0007669"/>
    <property type="project" value="TreeGrafter"/>
</dbReference>
<dbReference type="GO" id="GO:0051539">
    <property type="term" value="F:4 iron, 4 sulfur cluster binding"/>
    <property type="evidence" value="ECO:0007669"/>
    <property type="project" value="UniProtKB-KW"/>
</dbReference>
<dbReference type="GO" id="GO:0016830">
    <property type="term" value="F:carbon-carbon lyase activity"/>
    <property type="evidence" value="ECO:0007669"/>
    <property type="project" value="InterPro"/>
</dbReference>
<dbReference type="GO" id="GO:0008270">
    <property type="term" value="F:zinc ion binding"/>
    <property type="evidence" value="ECO:0007669"/>
    <property type="project" value="UniProtKB-UniRule"/>
</dbReference>
<dbReference type="GO" id="GO:0009228">
    <property type="term" value="P:thiamine biosynthetic process"/>
    <property type="evidence" value="ECO:0007669"/>
    <property type="project" value="UniProtKB-KW"/>
</dbReference>
<dbReference type="GO" id="GO:0009229">
    <property type="term" value="P:thiamine diphosphate biosynthetic process"/>
    <property type="evidence" value="ECO:0007669"/>
    <property type="project" value="UniProtKB-UniRule"/>
</dbReference>
<dbReference type="FunFam" id="3.20.20.540:FF:000001">
    <property type="entry name" value="Phosphomethylpyrimidine synthase"/>
    <property type="match status" value="1"/>
</dbReference>
<dbReference type="Gene3D" id="6.10.250.620">
    <property type="match status" value="1"/>
</dbReference>
<dbReference type="Gene3D" id="3.20.20.540">
    <property type="entry name" value="Radical SAM ThiC family, central domain"/>
    <property type="match status" value="1"/>
</dbReference>
<dbReference type="HAMAP" id="MF_00089">
    <property type="entry name" value="ThiC"/>
    <property type="match status" value="1"/>
</dbReference>
<dbReference type="InterPro" id="IPR037509">
    <property type="entry name" value="ThiC"/>
</dbReference>
<dbReference type="InterPro" id="IPR038521">
    <property type="entry name" value="ThiC/Bza_core_dom"/>
</dbReference>
<dbReference type="InterPro" id="IPR002817">
    <property type="entry name" value="ThiC/BzaA/B"/>
</dbReference>
<dbReference type="NCBIfam" id="NF006763">
    <property type="entry name" value="PRK09284.1"/>
    <property type="match status" value="1"/>
</dbReference>
<dbReference type="NCBIfam" id="NF009895">
    <property type="entry name" value="PRK13352.1"/>
    <property type="match status" value="1"/>
</dbReference>
<dbReference type="NCBIfam" id="TIGR00190">
    <property type="entry name" value="thiC"/>
    <property type="match status" value="1"/>
</dbReference>
<dbReference type="PANTHER" id="PTHR30557:SF1">
    <property type="entry name" value="PHOSPHOMETHYLPYRIMIDINE SYNTHASE, CHLOROPLASTIC"/>
    <property type="match status" value="1"/>
</dbReference>
<dbReference type="PANTHER" id="PTHR30557">
    <property type="entry name" value="THIAMINE BIOSYNTHESIS PROTEIN THIC"/>
    <property type="match status" value="1"/>
</dbReference>
<dbReference type="Pfam" id="PF01964">
    <property type="entry name" value="ThiC_Rad_SAM"/>
    <property type="match status" value="1"/>
</dbReference>
<dbReference type="SFLD" id="SFLDF00407">
    <property type="entry name" value="phosphomethylpyrimidine_syntha"/>
    <property type="match status" value="1"/>
</dbReference>
<dbReference type="SFLD" id="SFLDG01114">
    <property type="entry name" value="phosphomethylpyrimidine_syntha"/>
    <property type="match status" value="1"/>
</dbReference>
<dbReference type="SFLD" id="SFLDS00113">
    <property type="entry name" value="Radical_SAM_Phosphomethylpyrim"/>
    <property type="match status" value="1"/>
</dbReference>
<feature type="chain" id="PRO_0000242285" description="Phosphomethylpyrimidine synthase">
    <location>
        <begin position="1"/>
        <end position="466"/>
    </location>
</feature>
<feature type="binding site" evidence="1">
    <location>
        <position position="80"/>
    </location>
    <ligand>
        <name>substrate</name>
    </ligand>
</feature>
<feature type="binding site" evidence="1">
    <location>
        <position position="109"/>
    </location>
    <ligand>
        <name>substrate</name>
    </ligand>
</feature>
<feature type="binding site" evidence="1">
    <location>
        <position position="139"/>
    </location>
    <ligand>
        <name>substrate</name>
    </ligand>
</feature>
<feature type="binding site" evidence="1">
    <location>
        <position position="175"/>
    </location>
    <ligand>
        <name>substrate</name>
    </ligand>
</feature>
<feature type="binding site" evidence="1">
    <location>
        <begin position="195"/>
        <end position="197"/>
    </location>
    <ligand>
        <name>substrate</name>
    </ligand>
</feature>
<feature type="binding site" evidence="1">
    <location>
        <begin position="236"/>
        <end position="239"/>
    </location>
    <ligand>
        <name>substrate</name>
    </ligand>
</feature>
<feature type="binding site" evidence="1">
    <location>
        <position position="275"/>
    </location>
    <ligand>
        <name>substrate</name>
    </ligand>
</feature>
<feature type="binding site" evidence="1">
    <location>
        <position position="279"/>
    </location>
    <ligand>
        <name>Zn(2+)</name>
        <dbReference type="ChEBI" id="CHEBI:29105"/>
    </ligand>
</feature>
<feature type="binding site" evidence="1">
    <location>
        <position position="302"/>
    </location>
    <ligand>
        <name>substrate</name>
    </ligand>
</feature>
<feature type="binding site" evidence="1">
    <location>
        <position position="343"/>
    </location>
    <ligand>
        <name>Zn(2+)</name>
        <dbReference type="ChEBI" id="CHEBI:29105"/>
    </ligand>
</feature>
<feature type="binding site" evidence="1">
    <location>
        <position position="423"/>
    </location>
    <ligand>
        <name>[4Fe-4S] cluster</name>
        <dbReference type="ChEBI" id="CHEBI:49883"/>
        <note>4Fe-4S-S-AdoMet</note>
    </ligand>
</feature>
<feature type="binding site" evidence="1">
    <location>
        <position position="426"/>
    </location>
    <ligand>
        <name>[4Fe-4S] cluster</name>
        <dbReference type="ChEBI" id="CHEBI:49883"/>
        <note>4Fe-4S-S-AdoMet</note>
    </ligand>
</feature>
<feature type="binding site" evidence="1">
    <location>
        <position position="431"/>
    </location>
    <ligand>
        <name>[4Fe-4S] cluster</name>
        <dbReference type="ChEBI" id="CHEBI:49883"/>
        <note>4Fe-4S-S-AdoMet</note>
    </ligand>
</feature>
<reference key="1">
    <citation type="journal article" date="2007" name="PLoS Genet.">
        <title>Patterns and implications of gene gain and loss in the evolution of Prochlorococcus.</title>
        <authorList>
            <person name="Kettler G.C."/>
            <person name="Martiny A.C."/>
            <person name="Huang K."/>
            <person name="Zucker J."/>
            <person name="Coleman M.L."/>
            <person name="Rodrigue S."/>
            <person name="Chen F."/>
            <person name="Lapidus A."/>
            <person name="Ferriera S."/>
            <person name="Johnson J."/>
            <person name="Steglich C."/>
            <person name="Church G.M."/>
            <person name="Richardson P."/>
            <person name="Chisholm S.W."/>
        </authorList>
    </citation>
    <scope>NUCLEOTIDE SEQUENCE [LARGE SCALE GENOMIC DNA]</scope>
    <source>
        <strain>NATL2A</strain>
    </source>
</reference>
<evidence type="ECO:0000255" key="1">
    <source>
        <dbReference type="HAMAP-Rule" id="MF_00089"/>
    </source>
</evidence>
<proteinExistence type="inferred from homology"/>
<organism>
    <name type="scientific">Prochlorococcus marinus (strain NATL2A)</name>
    <dbReference type="NCBI Taxonomy" id="59920"/>
    <lineage>
        <taxon>Bacteria</taxon>
        <taxon>Bacillati</taxon>
        <taxon>Cyanobacteriota</taxon>
        <taxon>Cyanophyceae</taxon>
        <taxon>Synechococcales</taxon>
        <taxon>Prochlorococcaceae</taxon>
        <taxon>Prochlorococcus</taxon>
    </lineage>
</organism>
<protein>
    <recommendedName>
        <fullName evidence="1">Phosphomethylpyrimidine synthase</fullName>
        <ecNumber evidence="1">4.1.99.17</ecNumber>
    </recommendedName>
    <alternativeName>
        <fullName evidence="1">Hydroxymethylpyrimidine phosphate synthase</fullName>
        <shortName evidence="1">HMP-P synthase</shortName>
        <shortName evidence="1">HMP-phosphate synthase</shortName>
        <shortName evidence="1">HMPP synthase</shortName>
    </alternativeName>
    <alternativeName>
        <fullName evidence="1">Thiamine biosynthesis protein ThiC</fullName>
    </alternativeName>
</protein>
<accession>Q46IK0</accession>